<organism>
    <name type="scientific">Clostridium kluyveri (strain ATCC 8527 / DSM 555 / NBRC 12016 / NCIMB 10680 / K1)</name>
    <dbReference type="NCBI Taxonomy" id="431943"/>
    <lineage>
        <taxon>Bacteria</taxon>
        <taxon>Bacillati</taxon>
        <taxon>Bacillota</taxon>
        <taxon>Clostridia</taxon>
        <taxon>Eubacteriales</taxon>
        <taxon>Clostridiaceae</taxon>
        <taxon>Clostridium</taxon>
    </lineage>
</organism>
<comment type="similarity">
    <text evidence="1">Belongs to the UPF0178 family.</text>
</comment>
<evidence type="ECO:0000255" key="1">
    <source>
        <dbReference type="HAMAP-Rule" id="MF_00489"/>
    </source>
</evidence>
<accession>A5N2Y5</accession>
<protein>
    <recommendedName>
        <fullName evidence="1">UPF0178 protein CKL_3490</fullName>
    </recommendedName>
</protein>
<dbReference type="EMBL" id="CP000673">
    <property type="protein sequence ID" value="EDK35481.1"/>
    <property type="molecule type" value="Genomic_DNA"/>
</dbReference>
<dbReference type="RefSeq" id="WP_012103812.1">
    <property type="nucleotide sequence ID" value="NC_009706.1"/>
</dbReference>
<dbReference type="KEGG" id="ckl:CKL_3490"/>
<dbReference type="eggNOG" id="COG1671">
    <property type="taxonomic scope" value="Bacteria"/>
</dbReference>
<dbReference type="HOGENOM" id="CLU_106619_0_0_9"/>
<dbReference type="Proteomes" id="UP000002411">
    <property type="component" value="Chromosome"/>
</dbReference>
<dbReference type="HAMAP" id="MF_00489">
    <property type="entry name" value="UPF0178"/>
    <property type="match status" value="1"/>
</dbReference>
<dbReference type="InterPro" id="IPR003791">
    <property type="entry name" value="UPF0178"/>
</dbReference>
<dbReference type="NCBIfam" id="NF001095">
    <property type="entry name" value="PRK00124.1"/>
    <property type="match status" value="1"/>
</dbReference>
<dbReference type="PANTHER" id="PTHR35146">
    <property type="entry name" value="UPF0178 PROTEIN YAII"/>
    <property type="match status" value="1"/>
</dbReference>
<dbReference type="PANTHER" id="PTHR35146:SF1">
    <property type="entry name" value="UPF0178 PROTEIN YAII"/>
    <property type="match status" value="1"/>
</dbReference>
<dbReference type="Pfam" id="PF02639">
    <property type="entry name" value="DUF188"/>
    <property type="match status" value="1"/>
</dbReference>
<proteinExistence type="inferred from homology"/>
<reference key="1">
    <citation type="journal article" date="2008" name="Proc. Natl. Acad. Sci. U.S.A.">
        <title>The genome of Clostridium kluyveri, a strict anaerobe with unique metabolic features.</title>
        <authorList>
            <person name="Seedorf H."/>
            <person name="Fricke W.F."/>
            <person name="Veith B."/>
            <person name="Brueggemann H."/>
            <person name="Liesegang H."/>
            <person name="Strittmatter A."/>
            <person name="Miethke M."/>
            <person name="Buckel W."/>
            <person name="Hinderberger J."/>
            <person name="Li F."/>
            <person name="Hagemeier C."/>
            <person name="Thauer R.K."/>
            <person name="Gottschalk G."/>
        </authorList>
    </citation>
    <scope>NUCLEOTIDE SEQUENCE [LARGE SCALE GENOMIC DNA]</scope>
    <source>
        <strain>ATCC 8527 / DSM 555 / NBRC 12016 / NCIMB 10680 / K1</strain>
    </source>
</reference>
<sequence length="152" mass="17312">MRILIDGDACPGKYIIENIARENDIEVIIYCDTNHILKSNYSTVVTVDSGFQSVDMVIVNKVRSGDIVVSQDYGVAAMVLGKKAYAINPKGYIYHEGNMDKLLFERYISSKVRRTGGRTSNPKKRTKEDDKRLRENLFQLILNGKVYKGEDW</sequence>
<feature type="chain" id="PRO_1000081375" description="UPF0178 protein CKL_3490">
    <location>
        <begin position="1"/>
        <end position="152"/>
    </location>
</feature>
<gene>
    <name type="ordered locus">CKL_3490</name>
</gene>
<keyword id="KW-1185">Reference proteome</keyword>
<name>Y3490_CLOK5</name>